<evidence type="ECO:0000255" key="1">
    <source>
        <dbReference type="HAMAP-Rule" id="MF_01042"/>
    </source>
</evidence>
<dbReference type="EC" id="3.1.-.-" evidence="1"/>
<dbReference type="EMBL" id="CP000503">
    <property type="protein sequence ID" value="ABM24393.1"/>
    <property type="molecule type" value="Genomic_DNA"/>
</dbReference>
<dbReference type="RefSeq" id="WP_011788894.1">
    <property type="nucleotide sequence ID" value="NC_008750.1"/>
</dbReference>
<dbReference type="SMR" id="A1RI98"/>
<dbReference type="GeneID" id="67444041"/>
<dbReference type="KEGG" id="shw:Sputw3181_1555"/>
<dbReference type="HOGENOM" id="CLU_055978_4_0_6"/>
<dbReference type="Proteomes" id="UP000002597">
    <property type="component" value="Chromosome"/>
</dbReference>
<dbReference type="GO" id="GO:0004521">
    <property type="term" value="F:RNA endonuclease activity"/>
    <property type="evidence" value="ECO:0007669"/>
    <property type="project" value="UniProtKB-UniRule"/>
</dbReference>
<dbReference type="GO" id="GO:0019843">
    <property type="term" value="F:rRNA binding"/>
    <property type="evidence" value="ECO:0007669"/>
    <property type="project" value="UniProtKB-UniRule"/>
</dbReference>
<dbReference type="GO" id="GO:0072344">
    <property type="term" value="P:rescue of stalled ribosome"/>
    <property type="evidence" value="ECO:0007669"/>
    <property type="project" value="UniProtKB-UniRule"/>
</dbReference>
<dbReference type="Gene3D" id="3.30.1370.110">
    <property type="match status" value="1"/>
</dbReference>
<dbReference type="HAMAP" id="MF_01042">
    <property type="entry name" value="SmrB"/>
    <property type="match status" value="1"/>
</dbReference>
<dbReference type="InterPro" id="IPR002625">
    <property type="entry name" value="Smr_dom"/>
</dbReference>
<dbReference type="InterPro" id="IPR036063">
    <property type="entry name" value="Smr_dom_sf"/>
</dbReference>
<dbReference type="InterPro" id="IPR022990">
    <property type="entry name" value="SmrB-like"/>
</dbReference>
<dbReference type="NCBIfam" id="NF003432">
    <property type="entry name" value="PRK04946.1"/>
    <property type="match status" value="1"/>
</dbReference>
<dbReference type="PANTHER" id="PTHR35562">
    <property type="entry name" value="DNA ENDONUCLEASE SMRA-RELATED"/>
    <property type="match status" value="1"/>
</dbReference>
<dbReference type="PANTHER" id="PTHR35562:SF1">
    <property type="entry name" value="UPF0115 PROTEIN YFCN"/>
    <property type="match status" value="1"/>
</dbReference>
<dbReference type="Pfam" id="PF01713">
    <property type="entry name" value="Smr"/>
    <property type="match status" value="1"/>
</dbReference>
<dbReference type="SMART" id="SM00463">
    <property type="entry name" value="SMR"/>
    <property type="match status" value="1"/>
</dbReference>
<dbReference type="SUPFAM" id="SSF160443">
    <property type="entry name" value="SMR domain-like"/>
    <property type="match status" value="1"/>
</dbReference>
<dbReference type="PROSITE" id="PS50828">
    <property type="entry name" value="SMR"/>
    <property type="match status" value="1"/>
</dbReference>
<feature type="chain" id="PRO_1000084364" description="Ribosome rescue factor SmrB">
    <location>
        <begin position="1"/>
        <end position="176"/>
    </location>
</feature>
<feature type="domain" description="Smr" evidence="1">
    <location>
        <begin position="93"/>
        <end position="168"/>
    </location>
</feature>
<sequence length="176" mass="20086">MNKDDDKEGLAMFSALIDGIKPITQDKRHFRTPLKTKQEIALKEQQLHANSYFSDTYQPLLPIQGPMRWLDDGVDSLELKRLRRGDYQPDLLLDLHGYRQSEAKLELAALIQACVKQQSQCCCVMHGYGSGILKQQVPMWLVQHPMVKAFHQAPKEWGGDAALLVLIDLGELPHRR</sequence>
<comment type="function">
    <text evidence="1">Acts as a ribosome collision sensor. Detects stalled/collided disomes (pairs of ribosomes where the leading ribosome is stalled and a second ribosome has collided with it) and endonucleolytically cleaves mRNA at the 5' boundary of the stalled ribosome. Stalled/collided disomes form a new interface (primarily via the 30S subunits) that binds SmrB. Cleaved mRNA becomes available for tmRNA ligation, leading to ribosomal subunit dissociation and rescue of stalled ribosomes.</text>
</comment>
<comment type="subunit">
    <text evidence="1">Associates with collided ribosomes, but not with correctly translating polysomes.</text>
</comment>
<comment type="similarity">
    <text evidence="1">Belongs to the SmrB family.</text>
</comment>
<organism>
    <name type="scientific">Shewanella sp. (strain W3-18-1)</name>
    <dbReference type="NCBI Taxonomy" id="351745"/>
    <lineage>
        <taxon>Bacteria</taxon>
        <taxon>Pseudomonadati</taxon>
        <taxon>Pseudomonadota</taxon>
        <taxon>Gammaproteobacteria</taxon>
        <taxon>Alteromonadales</taxon>
        <taxon>Shewanellaceae</taxon>
        <taxon>Shewanella</taxon>
    </lineage>
</organism>
<protein>
    <recommendedName>
        <fullName evidence="1">Ribosome rescue factor SmrB</fullName>
        <ecNumber evidence="1">3.1.-.-</ecNumber>
    </recommendedName>
</protein>
<name>SMRB_SHESW</name>
<accession>A1RI98</accession>
<gene>
    <name evidence="1" type="primary">smrB</name>
    <name type="ordered locus">Sputw3181_1555</name>
</gene>
<proteinExistence type="inferred from homology"/>
<keyword id="KW-0255">Endonuclease</keyword>
<keyword id="KW-0378">Hydrolase</keyword>
<keyword id="KW-0540">Nuclease</keyword>
<keyword id="KW-0694">RNA-binding</keyword>
<keyword id="KW-0699">rRNA-binding</keyword>
<reference key="1">
    <citation type="submission" date="2006-12" db="EMBL/GenBank/DDBJ databases">
        <title>Complete sequence of Shewanella sp. W3-18-1.</title>
        <authorList>
            <consortium name="US DOE Joint Genome Institute"/>
            <person name="Copeland A."/>
            <person name="Lucas S."/>
            <person name="Lapidus A."/>
            <person name="Barry K."/>
            <person name="Detter J.C."/>
            <person name="Glavina del Rio T."/>
            <person name="Hammon N."/>
            <person name="Israni S."/>
            <person name="Dalin E."/>
            <person name="Tice H."/>
            <person name="Pitluck S."/>
            <person name="Chain P."/>
            <person name="Malfatti S."/>
            <person name="Shin M."/>
            <person name="Vergez L."/>
            <person name="Schmutz J."/>
            <person name="Larimer F."/>
            <person name="Land M."/>
            <person name="Hauser L."/>
            <person name="Kyrpides N."/>
            <person name="Lykidis A."/>
            <person name="Tiedje J."/>
            <person name="Richardson P."/>
        </authorList>
    </citation>
    <scope>NUCLEOTIDE SEQUENCE [LARGE SCALE GENOMIC DNA]</scope>
    <source>
        <strain>W3-18-1</strain>
    </source>
</reference>